<sequence length="563" mass="60432">MTPPGAPKYVIGVDFGTLSGRALVVRVADGAEMGSAEHTYRHGVVTEALPGHPEVRLPADYALQVPADYIDVLRFAIPEAVANAGIDPADVVGLGTDFTACTMVAATSDGTPLCQLDEFADRPHAYAKLWRHHAAQPQADRINALAAARGETWLPRYGGLISSEWEFAKGLQILEEDPEIYAAIDRWVEGADWIVWQLTGRYVRNISTAGYKAIRQDGKYPSRAFLAELNPGFASFVEDKIEQPIGRLGEAAGTLTAQAAAWTGLPEGIVVAVGNIDAHVTAAAADAADPGRLIAIMGTSTCHVMNGRFLREVPGMCGVVDGGITDGLWGYEAGQSGVGDIFAWFTKNCVPKEIAIEASRRGLTLHEHLSELAAEQEVGEHGLVALDWHSGNRSVLVDHHLSGIMVGQTLDTTCVDQYRALLEATAFGTRMIVETFQRSGVPVEELVVAGGLIKNPLLMQIYADVTGLPLSCVTSTQAPALGAAIHAAAAAGEYRDVPTASARMGGRTKNAFTPIPENVTRYNALYAAYVELHDWFGRNNPLMRRLRVMRSNAERRETVGSAQ</sequence>
<proteinExistence type="inferred from homology"/>
<dbReference type="EC" id="2.7.1.16" evidence="1"/>
<dbReference type="EMBL" id="AB038527">
    <property type="protein sequence ID" value="BAA92524.1"/>
    <property type="molecule type" value="Genomic_DNA"/>
</dbReference>
<dbReference type="RefSeq" id="WP_058125669.1">
    <property type="nucleotide sequence ID" value="NZ_CP082846.1"/>
</dbReference>
<dbReference type="SMR" id="Q9LBQ3"/>
<dbReference type="UniPathway" id="UPA00145">
    <property type="reaction ID" value="UER00566"/>
</dbReference>
<dbReference type="GO" id="GO:0005737">
    <property type="term" value="C:cytoplasm"/>
    <property type="evidence" value="ECO:0007669"/>
    <property type="project" value="TreeGrafter"/>
</dbReference>
<dbReference type="GO" id="GO:0005524">
    <property type="term" value="F:ATP binding"/>
    <property type="evidence" value="ECO:0007669"/>
    <property type="project" value="UniProtKB-KW"/>
</dbReference>
<dbReference type="GO" id="GO:0019150">
    <property type="term" value="F:D-ribulokinase activity"/>
    <property type="evidence" value="ECO:0007669"/>
    <property type="project" value="RHEA"/>
</dbReference>
<dbReference type="GO" id="GO:0008741">
    <property type="term" value="F:ribulokinase activity"/>
    <property type="evidence" value="ECO:0007669"/>
    <property type="project" value="UniProtKB-UniRule"/>
</dbReference>
<dbReference type="GO" id="GO:0019569">
    <property type="term" value="P:L-arabinose catabolic process to xylulose 5-phosphate"/>
    <property type="evidence" value="ECO:0007669"/>
    <property type="project" value="UniProtKB-UniRule"/>
</dbReference>
<dbReference type="CDD" id="cd07781">
    <property type="entry name" value="ASKHA_NBD_FGGY_L-RBK"/>
    <property type="match status" value="1"/>
</dbReference>
<dbReference type="Gene3D" id="3.30.420.40">
    <property type="match status" value="2"/>
</dbReference>
<dbReference type="HAMAP" id="MF_00520">
    <property type="entry name" value="Ribulokinase"/>
    <property type="match status" value="1"/>
</dbReference>
<dbReference type="InterPro" id="IPR043129">
    <property type="entry name" value="ATPase_NBD"/>
</dbReference>
<dbReference type="InterPro" id="IPR000577">
    <property type="entry name" value="Carb_kinase_FGGY"/>
</dbReference>
<dbReference type="InterPro" id="IPR018485">
    <property type="entry name" value="FGGY_C"/>
</dbReference>
<dbReference type="InterPro" id="IPR018484">
    <property type="entry name" value="FGGY_N"/>
</dbReference>
<dbReference type="InterPro" id="IPR005929">
    <property type="entry name" value="Ribulokinase"/>
</dbReference>
<dbReference type="NCBIfam" id="TIGR01234">
    <property type="entry name" value="L-ribulokinase"/>
    <property type="match status" value="1"/>
</dbReference>
<dbReference type="NCBIfam" id="NF003154">
    <property type="entry name" value="PRK04123.1"/>
    <property type="match status" value="1"/>
</dbReference>
<dbReference type="PANTHER" id="PTHR43435:SF4">
    <property type="entry name" value="FGGY CARBOHYDRATE KINASE DOMAIN-CONTAINING PROTEIN"/>
    <property type="match status" value="1"/>
</dbReference>
<dbReference type="PANTHER" id="PTHR43435">
    <property type="entry name" value="RIBULOKINASE"/>
    <property type="match status" value="1"/>
</dbReference>
<dbReference type="Pfam" id="PF02782">
    <property type="entry name" value="FGGY_C"/>
    <property type="match status" value="1"/>
</dbReference>
<dbReference type="Pfam" id="PF00370">
    <property type="entry name" value="FGGY_N"/>
    <property type="match status" value="1"/>
</dbReference>
<dbReference type="PIRSF" id="PIRSF000538">
    <property type="entry name" value="GlpK"/>
    <property type="match status" value="1"/>
</dbReference>
<dbReference type="SUPFAM" id="SSF53067">
    <property type="entry name" value="Actin-like ATPase domain"/>
    <property type="match status" value="2"/>
</dbReference>
<comment type="catalytic activity">
    <reaction evidence="1">
        <text>D-ribulose + ATP = D-ribulose 5-phosphate + ADP + H(+)</text>
        <dbReference type="Rhea" id="RHEA:17601"/>
        <dbReference type="ChEBI" id="CHEBI:15378"/>
        <dbReference type="ChEBI" id="CHEBI:17173"/>
        <dbReference type="ChEBI" id="CHEBI:30616"/>
        <dbReference type="ChEBI" id="CHEBI:58121"/>
        <dbReference type="ChEBI" id="CHEBI:456216"/>
        <dbReference type="EC" id="2.7.1.16"/>
    </reaction>
</comment>
<comment type="catalytic activity">
    <reaction evidence="1">
        <text>L-ribulose + ATP = L-ribulose 5-phosphate + ADP + H(+)</text>
        <dbReference type="Rhea" id="RHEA:22072"/>
        <dbReference type="ChEBI" id="CHEBI:15378"/>
        <dbReference type="ChEBI" id="CHEBI:16880"/>
        <dbReference type="ChEBI" id="CHEBI:30616"/>
        <dbReference type="ChEBI" id="CHEBI:58226"/>
        <dbReference type="ChEBI" id="CHEBI:456216"/>
        <dbReference type="EC" id="2.7.1.16"/>
    </reaction>
</comment>
<comment type="pathway">
    <text evidence="1">Carbohydrate degradation; L-arabinose degradation via L-ribulose; D-xylulose 5-phosphate from L-arabinose (bacterial route): step 2/3.</text>
</comment>
<comment type="similarity">
    <text evidence="1">Belongs to the ribulokinase family.</text>
</comment>
<evidence type="ECO:0000255" key="1">
    <source>
        <dbReference type="HAMAP-Rule" id="MF_00520"/>
    </source>
</evidence>
<keyword id="KW-0054">Arabinose catabolism</keyword>
<keyword id="KW-0067">ATP-binding</keyword>
<keyword id="KW-0119">Carbohydrate metabolism</keyword>
<keyword id="KW-0418">Kinase</keyword>
<keyword id="KW-0547">Nucleotide-binding</keyword>
<keyword id="KW-0808">Transferase</keyword>
<accession>Q9LBQ3</accession>
<feature type="chain" id="PRO_0000198362" description="Ribulokinase">
    <location>
        <begin position="1"/>
        <end position="563"/>
    </location>
</feature>
<name>ARAB_MYCSM</name>
<organism>
    <name type="scientific">Mycolicibacterium smegmatis</name>
    <name type="common">Mycobacterium smegmatis</name>
    <dbReference type="NCBI Taxonomy" id="1772"/>
    <lineage>
        <taxon>Bacteria</taxon>
        <taxon>Bacillati</taxon>
        <taxon>Actinomycetota</taxon>
        <taxon>Actinomycetes</taxon>
        <taxon>Mycobacteriales</taxon>
        <taxon>Mycobacteriaceae</taxon>
        <taxon>Mycolicibacterium</taxon>
    </lineage>
</organism>
<reference key="1">
    <citation type="submission" date="2000-02" db="EMBL/GenBank/DDBJ databases">
        <authorList>
            <person name="Soda A."/>
            <person name="Takata G."/>
            <person name="Izumori K."/>
        </authorList>
    </citation>
    <scope>NUCLEOTIDE SEQUENCE [GENOMIC DNA]</scope>
    <source>
        <strain>SMDU</strain>
    </source>
</reference>
<protein>
    <recommendedName>
        <fullName evidence="1">Ribulokinase</fullName>
        <ecNumber evidence="1">2.7.1.16</ecNumber>
    </recommendedName>
</protein>
<gene>
    <name evidence="1" type="primary">araB</name>
</gene>